<proteinExistence type="inferred from homology"/>
<feature type="chain" id="PRO_1000088590" description="Tyrosine--tRNA ligase">
    <location>
        <begin position="1"/>
        <end position="418"/>
    </location>
</feature>
<feature type="domain" description="S4 RNA-binding" evidence="1">
    <location>
        <begin position="348"/>
        <end position="413"/>
    </location>
</feature>
<feature type="short sequence motif" description="'HIGH' region">
    <location>
        <begin position="43"/>
        <end position="52"/>
    </location>
</feature>
<feature type="short sequence motif" description="'KMSKS' region">
    <location>
        <begin position="235"/>
        <end position="239"/>
    </location>
</feature>
<feature type="binding site" evidence="1">
    <location>
        <position position="38"/>
    </location>
    <ligand>
        <name>L-tyrosine</name>
        <dbReference type="ChEBI" id="CHEBI:58315"/>
    </ligand>
</feature>
<feature type="binding site" evidence="1">
    <location>
        <position position="175"/>
    </location>
    <ligand>
        <name>L-tyrosine</name>
        <dbReference type="ChEBI" id="CHEBI:58315"/>
    </ligand>
</feature>
<feature type="binding site" evidence="1">
    <location>
        <position position="179"/>
    </location>
    <ligand>
        <name>L-tyrosine</name>
        <dbReference type="ChEBI" id="CHEBI:58315"/>
    </ligand>
</feature>
<feature type="binding site" evidence="1">
    <location>
        <position position="238"/>
    </location>
    <ligand>
        <name>ATP</name>
        <dbReference type="ChEBI" id="CHEBI:30616"/>
    </ligand>
</feature>
<dbReference type="EC" id="6.1.1.1" evidence="1"/>
<dbReference type="EMBL" id="CP000236">
    <property type="protein sequence ID" value="ABD45429.1"/>
    <property type="molecule type" value="Genomic_DNA"/>
</dbReference>
<dbReference type="RefSeq" id="WP_006010212.1">
    <property type="nucleotide sequence ID" value="NC_007799.1"/>
</dbReference>
<dbReference type="SMR" id="Q2GI13"/>
<dbReference type="STRING" id="205920.ECH_0091"/>
<dbReference type="KEGG" id="ech:ECH_0091"/>
<dbReference type="eggNOG" id="COG0162">
    <property type="taxonomic scope" value="Bacteria"/>
</dbReference>
<dbReference type="HOGENOM" id="CLU_024003_0_3_5"/>
<dbReference type="OrthoDB" id="9804243at2"/>
<dbReference type="Proteomes" id="UP000008320">
    <property type="component" value="Chromosome"/>
</dbReference>
<dbReference type="GO" id="GO:0005829">
    <property type="term" value="C:cytosol"/>
    <property type="evidence" value="ECO:0007669"/>
    <property type="project" value="TreeGrafter"/>
</dbReference>
<dbReference type="GO" id="GO:0005524">
    <property type="term" value="F:ATP binding"/>
    <property type="evidence" value="ECO:0007669"/>
    <property type="project" value="UniProtKB-UniRule"/>
</dbReference>
<dbReference type="GO" id="GO:0003723">
    <property type="term" value="F:RNA binding"/>
    <property type="evidence" value="ECO:0007669"/>
    <property type="project" value="UniProtKB-KW"/>
</dbReference>
<dbReference type="GO" id="GO:0004831">
    <property type="term" value="F:tyrosine-tRNA ligase activity"/>
    <property type="evidence" value="ECO:0007669"/>
    <property type="project" value="UniProtKB-UniRule"/>
</dbReference>
<dbReference type="GO" id="GO:0006437">
    <property type="term" value="P:tyrosyl-tRNA aminoacylation"/>
    <property type="evidence" value="ECO:0007669"/>
    <property type="project" value="UniProtKB-UniRule"/>
</dbReference>
<dbReference type="CDD" id="cd00805">
    <property type="entry name" value="TyrRS_core"/>
    <property type="match status" value="1"/>
</dbReference>
<dbReference type="FunFam" id="1.10.240.10:FF:000001">
    <property type="entry name" value="Tyrosine--tRNA ligase"/>
    <property type="match status" value="1"/>
</dbReference>
<dbReference type="Gene3D" id="3.40.50.620">
    <property type="entry name" value="HUPs"/>
    <property type="match status" value="1"/>
</dbReference>
<dbReference type="Gene3D" id="3.10.290.10">
    <property type="entry name" value="RNA-binding S4 domain"/>
    <property type="match status" value="1"/>
</dbReference>
<dbReference type="Gene3D" id="1.10.240.10">
    <property type="entry name" value="Tyrosyl-Transfer RNA Synthetase"/>
    <property type="match status" value="1"/>
</dbReference>
<dbReference type="HAMAP" id="MF_02006">
    <property type="entry name" value="Tyr_tRNA_synth_type1"/>
    <property type="match status" value="1"/>
</dbReference>
<dbReference type="InterPro" id="IPR002305">
    <property type="entry name" value="aa-tRNA-synth_Ic"/>
</dbReference>
<dbReference type="InterPro" id="IPR014729">
    <property type="entry name" value="Rossmann-like_a/b/a_fold"/>
</dbReference>
<dbReference type="InterPro" id="IPR036986">
    <property type="entry name" value="S4_RNA-bd_sf"/>
</dbReference>
<dbReference type="InterPro" id="IPR002307">
    <property type="entry name" value="Tyr-tRNA-ligase"/>
</dbReference>
<dbReference type="InterPro" id="IPR024088">
    <property type="entry name" value="Tyr-tRNA-ligase_bac-type"/>
</dbReference>
<dbReference type="InterPro" id="IPR024107">
    <property type="entry name" value="Tyr-tRNA-ligase_bac_1"/>
</dbReference>
<dbReference type="NCBIfam" id="TIGR00234">
    <property type="entry name" value="tyrS"/>
    <property type="match status" value="1"/>
</dbReference>
<dbReference type="PANTHER" id="PTHR11766:SF0">
    <property type="entry name" value="TYROSINE--TRNA LIGASE, MITOCHONDRIAL"/>
    <property type="match status" value="1"/>
</dbReference>
<dbReference type="PANTHER" id="PTHR11766">
    <property type="entry name" value="TYROSYL-TRNA SYNTHETASE"/>
    <property type="match status" value="1"/>
</dbReference>
<dbReference type="Pfam" id="PF00579">
    <property type="entry name" value="tRNA-synt_1b"/>
    <property type="match status" value="1"/>
</dbReference>
<dbReference type="PRINTS" id="PR01040">
    <property type="entry name" value="TRNASYNTHTYR"/>
</dbReference>
<dbReference type="SUPFAM" id="SSF55174">
    <property type="entry name" value="Alpha-L RNA-binding motif"/>
    <property type="match status" value="1"/>
</dbReference>
<dbReference type="SUPFAM" id="SSF52374">
    <property type="entry name" value="Nucleotidylyl transferase"/>
    <property type="match status" value="1"/>
</dbReference>
<dbReference type="PROSITE" id="PS50889">
    <property type="entry name" value="S4"/>
    <property type="match status" value="1"/>
</dbReference>
<name>SYY_EHRCR</name>
<organism>
    <name type="scientific">Ehrlichia chaffeensis (strain ATCC CRL-10679 / Arkansas)</name>
    <dbReference type="NCBI Taxonomy" id="205920"/>
    <lineage>
        <taxon>Bacteria</taxon>
        <taxon>Pseudomonadati</taxon>
        <taxon>Pseudomonadota</taxon>
        <taxon>Alphaproteobacteria</taxon>
        <taxon>Rickettsiales</taxon>
        <taxon>Anaplasmataceae</taxon>
        <taxon>Ehrlichia</taxon>
    </lineage>
</organism>
<accession>Q2GI13</accession>
<gene>
    <name evidence="1" type="primary">tyrS</name>
    <name type="ordered locus">ECH_0091</name>
</gene>
<keyword id="KW-0030">Aminoacyl-tRNA synthetase</keyword>
<keyword id="KW-0067">ATP-binding</keyword>
<keyword id="KW-0963">Cytoplasm</keyword>
<keyword id="KW-0436">Ligase</keyword>
<keyword id="KW-0547">Nucleotide-binding</keyword>
<keyword id="KW-0648">Protein biosynthesis</keyword>
<keyword id="KW-1185">Reference proteome</keyword>
<keyword id="KW-0694">RNA-binding</keyword>
<sequence length="418" mass="47688">MKLESQFLSFLYSRGYCSQCTNISMLDQLMSQQCVHAYIGFDCTAKSLHVGSLIQVMILRHLQKFGHKPIILLGDGTTKIGDPSGKDKSRAMLSASEIEENALGIYEVLKKFIVFGDGPHDALLVRNAEWLNGLNYIEFLRDIGKHFSVNNMLTFDSVRLRLEREQNLSFLEFNYMLLQSYDFVELNRRYNCLLQIGGSDQWGNIVSGVELGRKLRLPELFGLTTNLLLTSSGEKMGKTAQGAVWLDGNMYSPVDYWQYFRNVKDEDVGRFLRLFTELSLNEIRNLELLQGHEINESKKILATEATRICHGEEIAQSVANDALKVFECNDDSGLSVFYVKKYDVELGLPIIKLLQMCEMEKSSSSARRLINDKGCKINDVVVLDMNYKLSLKDFYNTSYVKLSCGKKRHLKVMLESDF</sequence>
<evidence type="ECO:0000255" key="1">
    <source>
        <dbReference type="HAMAP-Rule" id="MF_02006"/>
    </source>
</evidence>
<comment type="function">
    <text evidence="1">Catalyzes the attachment of tyrosine to tRNA(Tyr) in a two-step reaction: tyrosine is first activated by ATP to form Tyr-AMP and then transferred to the acceptor end of tRNA(Tyr).</text>
</comment>
<comment type="catalytic activity">
    <reaction evidence="1">
        <text>tRNA(Tyr) + L-tyrosine + ATP = L-tyrosyl-tRNA(Tyr) + AMP + diphosphate + H(+)</text>
        <dbReference type="Rhea" id="RHEA:10220"/>
        <dbReference type="Rhea" id="RHEA-COMP:9706"/>
        <dbReference type="Rhea" id="RHEA-COMP:9707"/>
        <dbReference type="ChEBI" id="CHEBI:15378"/>
        <dbReference type="ChEBI" id="CHEBI:30616"/>
        <dbReference type="ChEBI" id="CHEBI:33019"/>
        <dbReference type="ChEBI" id="CHEBI:58315"/>
        <dbReference type="ChEBI" id="CHEBI:78442"/>
        <dbReference type="ChEBI" id="CHEBI:78536"/>
        <dbReference type="ChEBI" id="CHEBI:456215"/>
        <dbReference type="EC" id="6.1.1.1"/>
    </reaction>
</comment>
<comment type="subunit">
    <text evidence="1">Homodimer.</text>
</comment>
<comment type="subcellular location">
    <subcellularLocation>
        <location evidence="1">Cytoplasm</location>
    </subcellularLocation>
</comment>
<comment type="similarity">
    <text evidence="1">Belongs to the class-I aminoacyl-tRNA synthetase family. TyrS type 1 subfamily.</text>
</comment>
<protein>
    <recommendedName>
        <fullName evidence="1">Tyrosine--tRNA ligase</fullName>
        <ecNumber evidence="1">6.1.1.1</ecNumber>
    </recommendedName>
    <alternativeName>
        <fullName evidence="1">Tyrosyl-tRNA synthetase</fullName>
        <shortName evidence="1">TyrRS</shortName>
    </alternativeName>
</protein>
<reference key="1">
    <citation type="journal article" date="2006" name="PLoS Genet.">
        <title>Comparative genomics of emerging human ehrlichiosis agents.</title>
        <authorList>
            <person name="Dunning Hotopp J.C."/>
            <person name="Lin M."/>
            <person name="Madupu R."/>
            <person name="Crabtree J."/>
            <person name="Angiuoli S.V."/>
            <person name="Eisen J.A."/>
            <person name="Seshadri R."/>
            <person name="Ren Q."/>
            <person name="Wu M."/>
            <person name="Utterback T.R."/>
            <person name="Smith S."/>
            <person name="Lewis M."/>
            <person name="Khouri H."/>
            <person name="Zhang C."/>
            <person name="Niu H."/>
            <person name="Lin Q."/>
            <person name="Ohashi N."/>
            <person name="Zhi N."/>
            <person name="Nelson W.C."/>
            <person name="Brinkac L.M."/>
            <person name="Dodson R.J."/>
            <person name="Rosovitz M.J."/>
            <person name="Sundaram J.P."/>
            <person name="Daugherty S.C."/>
            <person name="Davidsen T."/>
            <person name="Durkin A.S."/>
            <person name="Gwinn M.L."/>
            <person name="Haft D.H."/>
            <person name="Selengut J.D."/>
            <person name="Sullivan S.A."/>
            <person name="Zafar N."/>
            <person name="Zhou L."/>
            <person name="Benahmed F."/>
            <person name="Forberger H."/>
            <person name="Halpin R."/>
            <person name="Mulligan S."/>
            <person name="Robinson J."/>
            <person name="White O."/>
            <person name="Rikihisa Y."/>
            <person name="Tettelin H."/>
        </authorList>
    </citation>
    <scope>NUCLEOTIDE SEQUENCE [LARGE SCALE GENOMIC DNA]</scope>
    <source>
        <strain>ATCC CRL-10679 / Arkansas</strain>
    </source>
</reference>